<keyword id="KW-0963">Cytoplasm</keyword>
<keyword id="KW-0312">Gluconeogenesis</keyword>
<keyword id="KW-0324">Glycolysis</keyword>
<keyword id="KW-0413">Isomerase</keyword>
<evidence type="ECO:0000255" key="1">
    <source>
        <dbReference type="HAMAP-Rule" id="MF_00473"/>
    </source>
</evidence>
<feature type="chain" id="PRO_1000125735" description="Glucose-6-phosphate isomerase">
    <location>
        <begin position="1"/>
        <end position="452"/>
    </location>
</feature>
<feature type="active site" description="Proton donor" evidence="1">
    <location>
        <position position="290"/>
    </location>
</feature>
<feature type="active site" evidence="1">
    <location>
        <position position="311"/>
    </location>
</feature>
<feature type="active site" evidence="1">
    <location>
        <position position="425"/>
    </location>
</feature>
<name>G6PI_LIMRJ</name>
<proteinExistence type="inferred from homology"/>
<gene>
    <name evidence="1" type="primary">pgi</name>
    <name type="ordered locus">LAR_0415</name>
</gene>
<sequence>MTHIKFDSSALKQFVHENELGEMQAMVNAANDELRNGTGAGADFRDWLHLPTEYDKEEFARIKKAADKIQRDSDVLVVIGIGGSYLGAQMAIDFLHNTFYQAQNAKDRKAPLVVFAGNSLSSTYVHDLIQLIGDKDFSINVVSKSGTTTEPSIAFRIFKGLLIKKYGENEANKRIYATTDKTKGALKTEADAHGYETFVIPDGVGGRYSVLSAVGLLPIAASGADIDKLMEGAAQAEKDYVDPDLTKNEAYQYAAYRNILYRKGYETELLENYEPNMRMFAEWWKQLAGESEGKDQKGIYPSSANFTTDLHSLGQYIQEGRRFLMETVVKLDKPNYDMEIPTEPDNLDGLGYLEGKTMDYVNTKAYEAVVAAHTDGGVPVMTVHIPQEDEYTLGYLIYFFEVAMGISGYLNGINPFNQPGVEAYKTNMFGLLGKPGYEEIGKELRAKMDKND</sequence>
<dbReference type="EC" id="5.3.1.9" evidence="1"/>
<dbReference type="EMBL" id="AP007281">
    <property type="protein sequence ID" value="BAG24931.1"/>
    <property type="molecule type" value="Genomic_DNA"/>
</dbReference>
<dbReference type="RefSeq" id="WP_003667509.1">
    <property type="nucleotide sequence ID" value="NC_010609.1"/>
</dbReference>
<dbReference type="SMR" id="B2G649"/>
<dbReference type="KEGG" id="lrf:LAR_0415"/>
<dbReference type="HOGENOM" id="CLU_037303_0_1_9"/>
<dbReference type="UniPathway" id="UPA00109">
    <property type="reaction ID" value="UER00181"/>
</dbReference>
<dbReference type="UniPathway" id="UPA00138"/>
<dbReference type="GO" id="GO:0005829">
    <property type="term" value="C:cytosol"/>
    <property type="evidence" value="ECO:0007669"/>
    <property type="project" value="TreeGrafter"/>
</dbReference>
<dbReference type="GO" id="GO:0097367">
    <property type="term" value="F:carbohydrate derivative binding"/>
    <property type="evidence" value="ECO:0007669"/>
    <property type="project" value="InterPro"/>
</dbReference>
<dbReference type="GO" id="GO:0004347">
    <property type="term" value="F:glucose-6-phosphate isomerase activity"/>
    <property type="evidence" value="ECO:0007669"/>
    <property type="project" value="UniProtKB-UniRule"/>
</dbReference>
<dbReference type="GO" id="GO:0048029">
    <property type="term" value="F:monosaccharide binding"/>
    <property type="evidence" value="ECO:0007669"/>
    <property type="project" value="TreeGrafter"/>
</dbReference>
<dbReference type="GO" id="GO:0006094">
    <property type="term" value="P:gluconeogenesis"/>
    <property type="evidence" value="ECO:0007669"/>
    <property type="project" value="UniProtKB-UniRule"/>
</dbReference>
<dbReference type="GO" id="GO:0051156">
    <property type="term" value="P:glucose 6-phosphate metabolic process"/>
    <property type="evidence" value="ECO:0007669"/>
    <property type="project" value="TreeGrafter"/>
</dbReference>
<dbReference type="GO" id="GO:0006096">
    <property type="term" value="P:glycolytic process"/>
    <property type="evidence" value="ECO:0007669"/>
    <property type="project" value="UniProtKB-UniRule"/>
</dbReference>
<dbReference type="CDD" id="cd05015">
    <property type="entry name" value="SIS_PGI_1"/>
    <property type="match status" value="1"/>
</dbReference>
<dbReference type="CDD" id="cd05016">
    <property type="entry name" value="SIS_PGI_2"/>
    <property type="match status" value="1"/>
</dbReference>
<dbReference type="FunFam" id="3.40.50.10490:FF:000015">
    <property type="entry name" value="Glucose-6-phosphate isomerase"/>
    <property type="match status" value="1"/>
</dbReference>
<dbReference type="FunFam" id="3.40.50.10490:FF:000016">
    <property type="entry name" value="Glucose-6-phosphate isomerase"/>
    <property type="match status" value="1"/>
</dbReference>
<dbReference type="Gene3D" id="3.40.50.10490">
    <property type="entry name" value="Glucose-6-phosphate isomerase like protein, domain 1"/>
    <property type="match status" value="3"/>
</dbReference>
<dbReference type="HAMAP" id="MF_00473">
    <property type="entry name" value="G6P_isomerase"/>
    <property type="match status" value="1"/>
</dbReference>
<dbReference type="InterPro" id="IPR001672">
    <property type="entry name" value="G6P_Isomerase"/>
</dbReference>
<dbReference type="InterPro" id="IPR018189">
    <property type="entry name" value="Phosphoglucose_isomerase_CS"/>
</dbReference>
<dbReference type="InterPro" id="IPR046348">
    <property type="entry name" value="SIS_dom_sf"/>
</dbReference>
<dbReference type="InterPro" id="IPR035476">
    <property type="entry name" value="SIS_PGI_1"/>
</dbReference>
<dbReference type="InterPro" id="IPR035482">
    <property type="entry name" value="SIS_PGI_2"/>
</dbReference>
<dbReference type="NCBIfam" id="NF010697">
    <property type="entry name" value="PRK14097.1"/>
    <property type="match status" value="1"/>
</dbReference>
<dbReference type="PANTHER" id="PTHR11469">
    <property type="entry name" value="GLUCOSE-6-PHOSPHATE ISOMERASE"/>
    <property type="match status" value="1"/>
</dbReference>
<dbReference type="PANTHER" id="PTHR11469:SF1">
    <property type="entry name" value="GLUCOSE-6-PHOSPHATE ISOMERASE"/>
    <property type="match status" value="1"/>
</dbReference>
<dbReference type="Pfam" id="PF00342">
    <property type="entry name" value="PGI"/>
    <property type="match status" value="1"/>
</dbReference>
<dbReference type="PRINTS" id="PR00662">
    <property type="entry name" value="G6PISOMERASE"/>
</dbReference>
<dbReference type="SUPFAM" id="SSF53697">
    <property type="entry name" value="SIS domain"/>
    <property type="match status" value="1"/>
</dbReference>
<dbReference type="PROSITE" id="PS00765">
    <property type="entry name" value="P_GLUCOSE_ISOMERASE_1"/>
    <property type="match status" value="1"/>
</dbReference>
<dbReference type="PROSITE" id="PS00174">
    <property type="entry name" value="P_GLUCOSE_ISOMERASE_2"/>
    <property type="match status" value="1"/>
</dbReference>
<dbReference type="PROSITE" id="PS51463">
    <property type="entry name" value="P_GLUCOSE_ISOMERASE_3"/>
    <property type="match status" value="1"/>
</dbReference>
<protein>
    <recommendedName>
        <fullName evidence="1">Glucose-6-phosphate isomerase</fullName>
        <shortName evidence="1">GPI</shortName>
        <ecNumber evidence="1">5.3.1.9</ecNumber>
    </recommendedName>
    <alternativeName>
        <fullName evidence="1">Phosphoglucose isomerase</fullName>
        <shortName evidence="1">PGI</shortName>
    </alternativeName>
    <alternativeName>
        <fullName evidence="1">Phosphohexose isomerase</fullName>
        <shortName evidence="1">PHI</shortName>
    </alternativeName>
</protein>
<reference key="1">
    <citation type="journal article" date="2008" name="DNA Res.">
        <title>Comparative genome analysis of Lactobacillus reuteri and Lactobacillus fermentum reveal a genomic island for reuterin and cobalamin production.</title>
        <authorList>
            <person name="Morita H."/>
            <person name="Toh H."/>
            <person name="Fukuda S."/>
            <person name="Horikawa H."/>
            <person name="Oshima K."/>
            <person name="Suzuki T."/>
            <person name="Murakami M."/>
            <person name="Hisamatsu S."/>
            <person name="Kato Y."/>
            <person name="Takizawa T."/>
            <person name="Fukuoka H."/>
            <person name="Yoshimura T."/>
            <person name="Itoh K."/>
            <person name="O'Sullivan D.J."/>
            <person name="McKay L.L."/>
            <person name="Ohno H."/>
            <person name="Kikuchi J."/>
            <person name="Masaoka T."/>
            <person name="Hattori M."/>
        </authorList>
    </citation>
    <scope>NUCLEOTIDE SEQUENCE [LARGE SCALE GENOMIC DNA]</scope>
    <source>
        <strain>JCM 1112</strain>
    </source>
</reference>
<accession>B2G649</accession>
<comment type="function">
    <text evidence="1">Catalyzes the reversible isomerization of glucose-6-phosphate to fructose-6-phosphate.</text>
</comment>
<comment type="catalytic activity">
    <reaction evidence="1">
        <text>alpha-D-glucose 6-phosphate = beta-D-fructose 6-phosphate</text>
        <dbReference type="Rhea" id="RHEA:11816"/>
        <dbReference type="ChEBI" id="CHEBI:57634"/>
        <dbReference type="ChEBI" id="CHEBI:58225"/>
        <dbReference type="EC" id="5.3.1.9"/>
    </reaction>
</comment>
<comment type="pathway">
    <text evidence="1">Carbohydrate biosynthesis; gluconeogenesis.</text>
</comment>
<comment type="pathway">
    <text evidence="1">Carbohydrate degradation; glycolysis; D-glyceraldehyde 3-phosphate and glycerone phosphate from D-glucose: step 2/4.</text>
</comment>
<comment type="subcellular location">
    <subcellularLocation>
        <location evidence="1">Cytoplasm</location>
    </subcellularLocation>
</comment>
<comment type="similarity">
    <text evidence="1">Belongs to the GPI family.</text>
</comment>
<organism>
    <name type="scientific">Limosilactobacillus reuteri subsp. reuteri (strain JCM 1112)</name>
    <name type="common">Lactobacillus reuteri</name>
    <dbReference type="NCBI Taxonomy" id="557433"/>
    <lineage>
        <taxon>Bacteria</taxon>
        <taxon>Bacillati</taxon>
        <taxon>Bacillota</taxon>
        <taxon>Bacilli</taxon>
        <taxon>Lactobacillales</taxon>
        <taxon>Lactobacillaceae</taxon>
        <taxon>Limosilactobacillus</taxon>
    </lineage>
</organism>